<comment type="function">
    <text evidence="2">Catalytic subunit of a heterodimer with Trmt112, which specifically methylates the 6th position of adenine in 18S rRNA.</text>
</comment>
<comment type="catalytic activity">
    <reaction evidence="2">
        <text>adenosine in rRNA + S-adenosyl-L-methionine = N(6)-methyladenosine in rRNA + S-adenosyl-L-homocysteine + H(+)</text>
        <dbReference type="Rhea" id="RHEA:58728"/>
        <dbReference type="Rhea" id="RHEA-COMP:15198"/>
        <dbReference type="Rhea" id="RHEA-COMP:15199"/>
        <dbReference type="ChEBI" id="CHEBI:15378"/>
        <dbReference type="ChEBI" id="CHEBI:57856"/>
        <dbReference type="ChEBI" id="CHEBI:59789"/>
        <dbReference type="ChEBI" id="CHEBI:74411"/>
        <dbReference type="ChEBI" id="CHEBI:74449"/>
    </reaction>
    <physiologicalReaction direction="left-to-right" evidence="2">
        <dbReference type="Rhea" id="RHEA:58729"/>
    </physiologicalReaction>
</comment>
<comment type="subunit">
    <text evidence="2">Heterodimer; heterodimerizes with Trmt112.</text>
</comment>
<comment type="subcellular location">
    <subcellularLocation>
        <location evidence="2">Cytoplasm</location>
    </subcellularLocation>
</comment>
<comment type="tissue specificity">
    <text evidence="2">Enriched in the brain.</text>
</comment>
<comment type="developmental stage">
    <text evidence="2">Expressed at high level in early embryo. Expression gradually decreases and remains low in the larval stages. A mild increase is observed at metamorphosis, and this level remains constant in the adult phase.</text>
</comment>
<comment type="disruption phenotype">
    <text evidence="2">Flies are viable and fertile and do not display obvious developmental defects (PubMed:32350990). They however show impaired orientation in walking behavioral assays (PubMed:32350990).</text>
</comment>
<comment type="similarity">
    <text evidence="4">Belongs to the methyltransferase superfamily. PrmA family.</text>
</comment>
<feature type="chain" id="PRO_0000453466" description="rRNA N(6)-adenosine-methyltransferase Mettl5">
    <location>
        <begin position="1"/>
        <end position="213"/>
    </location>
</feature>
<feature type="binding site" evidence="1">
    <location>
        <position position="28"/>
    </location>
    <ligand>
        <name>S-adenosyl-L-methionine</name>
        <dbReference type="ChEBI" id="CHEBI:59789"/>
    </ligand>
</feature>
<feature type="binding site" evidence="1">
    <location>
        <position position="31"/>
    </location>
    <ligand>
        <name>S-adenosyl-L-methionine</name>
        <dbReference type="ChEBI" id="CHEBI:59789"/>
    </ligand>
</feature>
<feature type="binding site" evidence="1">
    <location>
        <position position="59"/>
    </location>
    <ligand>
        <name>S-adenosyl-L-methionine</name>
        <dbReference type="ChEBI" id="CHEBI:59789"/>
    </ligand>
</feature>
<feature type="binding site" evidence="1">
    <location>
        <position position="62"/>
    </location>
    <ligand>
        <name>S-adenosyl-L-methionine</name>
        <dbReference type="ChEBI" id="CHEBI:59789"/>
    </ligand>
</feature>
<feature type="binding site" evidence="1">
    <location>
        <begin position="108"/>
        <end position="109"/>
    </location>
    <ligand>
        <name>S-adenosyl-L-methionine</name>
        <dbReference type="ChEBI" id="CHEBI:59789"/>
    </ligand>
</feature>
<proteinExistence type="evidence at protein level"/>
<organism>
    <name type="scientific">Drosophila melanogaster</name>
    <name type="common">Fruit fly</name>
    <dbReference type="NCBI Taxonomy" id="7227"/>
    <lineage>
        <taxon>Eukaryota</taxon>
        <taxon>Metazoa</taxon>
        <taxon>Ecdysozoa</taxon>
        <taxon>Arthropoda</taxon>
        <taxon>Hexapoda</taxon>
        <taxon>Insecta</taxon>
        <taxon>Pterygota</taxon>
        <taxon>Neoptera</taxon>
        <taxon>Endopterygota</taxon>
        <taxon>Diptera</taxon>
        <taxon>Brachycera</taxon>
        <taxon>Muscomorpha</taxon>
        <taxon>Ephydroidea</taxon>
        <taxon>Drosophilidae</taxon>
        <taxon>Drosophila</taxon>
        <taxon>Sophophora</taxon>
    </lineage>
</organism>
<evidence type="ECO:0000250" key="1">
    <source>
        <dbReference type="UniProtKB" id="Q9NRN9"/>
    </source>
</evidence>
<evidence type="ECO:0000269" key="2">
    <source>
    </source>
</evidence>
<evidence type="ECO:0000303" key="3">
    <source>
    </source>
</evidence>
<evidence type="ECO:0000305" key="4"/>
<evidence type="ECO:0000312" key="5">
    <source>
        <dbReference type="FlyBase" id="FBgn0036856"/>
    </source>
</evidence>
<accession>Q8MSW4</accession>
<accession>Q9VVX7</accession>
<gene>
    <name evidence="3 5" type="primary">Mettl5</name>
    <name evidence="5" type="ORF">CG9666</name>
</gene>
<name>METL5_DROME</name>
<reference key="1">
    <citation type="journal article" date="2000" name="Science">
        <title>The genome sequence of Drosophila melanogaster.</title>
        <authorList>
            <person name="Adams M.D."/>
            <person name="Celniker S.E."/>
            <person name="Holt R.A."/>
            <person name="Evans C.A."/>
            <person name="Gocayne J.D."/>
            <person name="Amanatides P.G."/>
            <person name="Scherer S.E."/>
            <person name="Li P.W."/>
            <person name="Hoskins R.A."/>
            <person name="Galle R.F."/>
            <person name="George R.A."/>
            <person name="Lewis S.E."/>
            <person name="Richards S."/>
            <person name="Ashburner M."/>
            <person name="Henderson S.N."/>
            <person name="Sutton G.G."/>
            <person name="Wortman J.R."/>
            <person name="Yandell M.D."/>
            <person name="Zhang Q."/>
            <person name="Chen L.X."/>
            <person name="Brandon R.C."/>
            <person name="Rogers Y.-H.C."/>
            <person name="Blazej R.G."/>
            <person name="Champe M."/>
            <person name="Pfeiffer B.D."/>
            <person name="Wan K.H."/>
            <person name="Doyle C."/>
            <person name="Baxter E.G."/>
            <person name="Helt G."/>
            <person name="Nelson C.R."/>
            <person name="Miklos G.L.G."/>
            <person name="Abril J.F."/>
            <person name="Agbayani A."/>
            <person name="An H.-J."/>
            <person name="Andrews-Pfannkoch C."/>
            <person name="Baldwin D."/>
            <person name="Ballew R.M."/>
            <person name="Basu A."/>
            <person name="Baxendale J."/>
            <person name="Bayraktaroglu L."/>
            <person name="Beasley E.M."/>
            <person name="Beeson K.Y."/>
            <person name="Benos P.V."/>
            <person name="Berman B.P."/>
            <person name="Bhandari D."/>
            <person name="Bolshakov S."/>
            <person name="Borkova D."/>
            <person name="Botchan M.R."/>
            <person name="Bouck J."/>
            <person name="Brokstein P."/>
            <person name="Brottier P."/>
            <person name="Burtis K.C."/>
            <person name="Busam D.A."/>
            <person name="Butler H."/>
            <person name="Cadieu E."/>
            <person name="Center A."/>
            <person name="Chandra I."/>
            <person name="Cherry J.M."/>
            <person name="Cawley S."/>
            <person name="Dahlke C."/>
            <person name="Davenport L.B."/>
            <person name="Davies P."/>
            <person name="de Pablos B."/>
            <person name="Delcher A."/>
            <person name="Deng Z."/>
            <person name="Mays A.D."/>
            <person name="Dew I."/>
            <person name="Dietz S.M."/>
            <person name="Dodson K."/>
            <person name="Doup L.E."/>
            <person name="Downes M."/>
            <person name="Dugan-Rocha S."/>
            <person name="Dunkov B.C."/>
            <person name="Dunn P."/>
            <person name="Durbin K.J."/>
            <person name="Evangelista C.C."/>
            <person name="Ferraz C."/>
            <person name="Ferriera S."/>
            <person name="Fleischmann W."/>
            <person name="Fosler C."/>
            <person name="Gabrielian A.E."/>
            <person name="Garg N.S."/>
            <person name="Gelbart W.M."/>
            <person name="Glasser K."/>
            <person name="Glodek A."/>
            <person name="Gong F."/>
            <person name="Gorrell J.H."/>
            <person name="Gu Z."/>
            <person name="Guan P."/>
            <person name="Harris M."/>
            <person name="Harris N.L."/>
            <person name="Harvey D.A."/>
            <person name="Heiman T.J."/>
            <person name="Hernandez J.R."/>
            <person name="Houck J."/>
            <person name="Hostin D."/>
            <person name="Houston K.A."/>
            <person name="Howland T.J."/>
            <person name="Wei M.-H."/>
            <person name="Ibegwam C."/>
            <person name="Jalali M."/>
            <person name="Kalush F."/>
            <person name="Karpen G.H."/>
            <person name="Ke Z."/>
            <person name="Kennison J.A."/>
            <person name="Ketchum K.A."/>
            <person name="Kimmel B.E."/>
            <person name="Kodira C.D."/>
            <person name="Kraft C.L."/>
            <person name="Kravitz S."/>
            <person name="Kulp D."/>
            <person name="Lai Z."/>
            <person name="Lasko P."/>
            <person name="Lei Y."/>
            <person name="Levitsky A.A."/>
            <person name="Li J.H."/>
            <person name="Li Z."/>
            <person name="Liang Y."/>
            <person name="Lin X."/>
            <person name="Liu X."/>
            <person name="Mattei B."/>
            <person name="McIntosh T.C."/>
            <person name="McLeod M.P."/>
            <person name="McPherson D."/>
            <person name="Merkulov G."/>
            <person name="Milshina N.V."/>
            <person name="Mobarry C."/>
            <person name="Morris J."/>
            <person name="Moshrefi A."/>
            <person name="Mount S.M."/>
            <person name="Moy M."/>
            <person name="Murphy B."/>
            <person name="Murphy L."/>
            <person name="Muzny D.M."/>
            <person name="Nelson D.L."/>
            <person name="Nelson D.R."/>
            <person name="Nelson K.A."/>
            <person name="Nixon K."/>
            <person name="Nusskern D.R."/>
            <person name="Pacleb J.M."/>
            <person name="Palazzolo M."/>
            <person name="Pittman G.S."/>
            <person name="Pan S."/>
            <person name="Pollard J."/>
            <person name="Puri V."/>
            <person name="Reese M.G."/>
            <person name="Reinert K."/>
            <person name="Remington K."/>
            <person name="Saunders R.D.C."/>
            <person name="Scheeler F."/>
            <person name="Shen H."/>
            <person name="Shue B.C."/>
            <person name="Siden-Kiamos I."/>
            <person name="Simpson M."/>
            <person name="Skupski M.P."/>
            <person name="Smith T.J."/>
            <person name="Spier E."/>
            <person name="Spradling A.C."/>
            <person name="Stapleton M."/>
            <person name="Strong R."/>
            <person name="Sun E."/>
            <person name="Svirskas R."/>
            <person name="Tector C."/>
            <person name="Turner R."/>
            <person name="Venter E."/>
            <person name="Wang A.H."/>
            <person name="Wang X."/>
            <person name="Wang Z.-Y."/>
            <person name="Wassarman D.A."/>
            <person name="Weinstock G.M."/>
            <person name="Weissenbach J."/>
            <person name="Williams S.M."/>
            <person name="Woodage T."/>
            <person name="Worley K.C."/>
            <person name="Wu D."/>
            <person name="Yang S."/>
            <person name="Yao Q.A."/>
            <person name="Ye J."/>
            <person name="Yeh R.-F."/>
            <person name="Zaveri J.S."/>
            <person name="Zhan M."/>
            <person name="Zhang G."/>
            <person name="Zhao Q."/>
            <person name="Zheng L."/>
            <person name="Zheng X.H."/>
            <person name="Zhong F.N."/>
            <person name="Zhong W."/>
            <person name="Zhou X."/>
            <person name="Zhu S.C."/>
            <person name="Zhu X."/>
            <person name="Smith H.O."/>
            <person name="Gibbs R.A."/>
            <person name="Myers E.W."/>
            <person name="Rubin G.M."/>
            <person name="Venter J.C."/>
        </authorList>
    </citation>
    <scope>NUCLEOTIDE SEQUENCE [LARGE SCALE GENOMIC DNA]</scope>
    <source>
        <strain>Berkeley</strain>
    </source>
</reference>
<reference key="2">
    <citation type="journal article" date="2002" name="Genome Biol.">
        <title>Annotation of the Drosophila melanogaster euchromatic genome: a systematic review.</title>
        <authorList>
            <person name="Misra S."/>
            <person name="Crosby M.A."/>
            <person name="Mungall C.J."/>
            <person name="Matthews B.B."/>
            <person name="Campbell K.S."/>
            <person name="Hradecky P."/>
            <person name="Huang Y."/>
            <person name="Kaminker J.S."/>
            <person name="Millburn G.H."/>
            <person name="Prochnik S.E."/>
            <person name="Smith C.D."/>
            <person name="Tupy J.L."/>
            <person name="Whitfield E.J."/>
            <person name="Bayraktaroglu L."/>
            <person name="Berman B.P."/>
            <person name="Bettencourt B.R."/>
            <person name="Celniker S.E."/>
            <person name="de Grey A.D.N.J."/>
            <person name="Drysdale R.A."/>
            <person name="Harris N.L."/>
            <person name="Richter J."/>
            <person name="Russo S."/>
            <person name="Schroeder A.J."/>
            <person name="Shu S.Q."/>
            <person name="Stapleton M."/>
            <person name="Yamada C."/>
            <person name="Ashburner M."/>
            <person name="Gelbart W.M."/>
            <person name="Rubin G.M."/>
            <person name="Lewis S.E."/>
        </authorList>
    </citation>
    <scope>GENOME REANNOTATION</scope>
    <source>
        <strain>Berkeley</strain>
    </source>
</reference>
<reference key="3">
    <citation type="journal article" date="2002" name="Genome Biol.">
        <title>A Drosophila full-length cDNA resource.</title>
        <authorList>
            <person name="Stapleton M."/>
            <person name="Carlson J.W."/>
            <person name="Brokstein P."/>
            <person name="Yu C."/>
            <person name="Champe M."/>
            <person name="George R.A."/>
            <person name="Guarin H."/>
            <person name="Kronmiller B."/>
            <person name="Pacleb J.M."/>
            <person name="Park S."/>
            <person name="Wan K.H."/>
            <person name="Rubin G.M."/>
            <person name="Celniker S.E."/>
        </authorList>
    </citation>
    <scope>NUCLEOTIDE SEQUENCE [LARGE SCALE MRNA]</scope>
    <source>
        <strain>Berkeley</strain>
        <tissue>Embryo</tissue>
    </source>
</reference>
<reference key="4">
    <citation type="journal article" date="2020" name="EMBO Rep.">
        <title>The 18S ribosomal RNA m6 A methyltransferase Mettl5 is required for normal walking behavior in Drosophila.</title>
        <authorList>
            <person name="Leismann J."/>
            <person name="Spagnuolo M."/>
            <person name="Pradhan M."/>
            <person name="Wacheul L."/>
            <person name="Vu M.A."/>
            <person name="Musheev M."/>
            <person name="Mier P."/>
            <person name="Andrade-Navarro M.A."/>
            <person name="Graille M."/>
            <person name="Niehrs C."/>
            <person name="Lafontaine D.L."/>
            <person name="Roignant J.Y."/>
        </authorList>
    </citation>
    <scope>FUNCTION</scope>
    <scope>INTERACTION WITH TRMT112</scope>
    <scope>SUBCELLULAR LOCATION</scope>
    <scope>TISSUE SPECIFICITY</scope>
    <scope>DEVELOPMENTAL STAGE</scope>
    <scope>DISRUPTION PHENOTYPE</scope>
</reference>
<protein>
    <recommendedName>
        <fullName evidence="3">rRNA N(6)-adenosine-methyltransferase Mettl5</fullName>
        <ecNumber evidence="2">2.1.1.-</ecNumber>
    </recommendedName>
    <alternativeName>
        <fullName evidence="3">Methyltransferase-like protein 5</fullName>
    </alternativeName>
</protein>
<dbReference type="EC" id="2.1.1.-" evidence="2"/>
<dbReference type="EMBL" id="AE014296">
    <property type="protein sequence ID" value="ACL83328.1"/>
    <property type="molecule type" value="Genomic_DNA"/>
</dbReference>
<dbReference type="EMBL" id="AE014296">
    <property type="protein sequence ID" value="AAF49178.2"/>
    <property type="molecule type" value="Genomic_DNA"/>
</dbReference>
<dbReference type="EMBL" id="AY118530">
    <property type="protein sequence ID" value="AAM49899.1"/>
    <property type="molecule type" value="mRNA"/>
</dbReference>
<dbReference type="RefSeq" id="NP_001137973.1">
    <property type="nucleotide sequence ID" value="NM_001144501.2"/>
</dbReference>
<dbReference type="RefSeq" id="NP_649098.2">
    <property type="nucleotide sequence ID" value="NM_140841.3"/>
</dbReference>
<dbReference type="SMR" id="Q8MSW4"/>
<dbReference type="FunCoup" id="Q8MSW4">
    <property type="interactions" value="1230"/>
</dbReference>
<dbReference type="STRING" id="7227.FBpp0310826"/>
<dbReference type="PaxDb" id="7227-FBpp0074759"/>
<dbReference type="EnsemblMetazoa" id="FBtr0074991">
    <property type="protein sequence ID" value="FBpp0074759"/>
    <property type="gene ID" value="FBgn0036856"/>
</dbReference>
<dbReference type="EnsemblMetazoa" id="FBtr0344454">
    <property type="protein sequence ID" value="FBpp0310826"/>
    <property type="gene ID" value="FBgn0036856"/>
</dbReference>
<dbReference type="GeneID" id="40096"/>
<dbReference type="KEGG" id="dme:Dmel_CG9666"/>
<dbReference type="UCSC" id="CG9666-RA">
    <property type="organism name" value="d. melanogaster"/>
</dbReference>
<dbReference type="AGR" id="FB:FBgn0036856"/>
<dbReference type="CTD" id="29081"/>
<dbReference type="FlyBase" id="FBgn0036856">
    <property type="gene designation" value="Mettl5"/>
</dbReference>
<dbReference type="VEuPathDB" id="VectorBase:FBgn0036856"/>
<dbReference type="eggNOG" id="KOG3420">
    <property type="taxonomic scope" value="Eukaryota"/>
</dbReference>
<dbReference type="GeneTree" id="ENSGT00390000000227"/>
<dbReference type="HOGENOM" id="CLU_074702_1_1_1"/>
<dbReference type="InParanoid" id="Q8MSW4"/>
<dbReference type="OMA" id="DVVYSIH"/>
<dbReference type="OrthoDB" id="419617at2759"/>
<dbReference type="PhylomeDB" id="Q8MSW4"/>
<dbReference type="BioGRID-ORCS" id="40096">
    <property type="hits" value="0 hits in 1 CRISPR screen"/>
</dbReference>
<dbReference type="ChiTaRS" id="CG9666">
    <property type="organism name" value="fly"/>
</dbReference>
<dbReference type="GenomeRNAi" id="40096"/>
<dbReference type="PRO" id="PR:Q8MSW4"/>
<dbReference type="Proteomes" id="UP000000803">
    <property type="component" value="Chromosome 3L"/>
</dbReference>
<dbReference type="Bgee" id="FBgn0036856">
    <property type="expression patterns" value="Expressed in saliva-secreting gland and 13 other cell types or tissues"/>
</dbReference>
<dbReference type="GO" id="GO:0005737">
    <property type="term" value="C:cytoplasm"/>
    <property type="evidence" value="ECO:0000314"/>
    <property type="project" value="UniProtKB"/>
</dbReference>
<dbReference type="GO" id="GO:0003676">
    <property type="term" value="F:nucleic acid binding"/>
    <property type="evidence" value="ECO:0007669"/>
    <property type="project" value="InterPro"/>
</dbReference>
<dbReference type="GO" id="GO:0008988">
    <property type="term" value="F:rRNA (adenine-N6-)-methyltransferase activity"/>
    <property type="evidence" value="ECO:0000314"/>
    <property type="project" value="UniProtKB"/>
</dbReference>
<dbReference type="GO" id="GO:0031167">
    <property type="term" value="P:rRNA methylation"/>
    <property type="evidence" value="ECO:0000314"/>
    <property type="project" value="UniProtKB"/>
</dbReference>
<dbReference type="CDD" id="cd02440">
    <property type="entry name" value="AdoMet_MTases"/>
    <property type="match status" value="1"/>
</dbReference>
<dbReference type="Gene3D" id="3.40.50.150">
    <property type="entry name" value="Vaccinia Virus protein VP39"/>
    <property type="match status" value="1"/>
</dbReference>
<dbReference type="InterPro" id="IPR002052">
    <property type="entry name" value="DNA_methylase_N6_adenine_CS"/>
</dbReference>
<dbReference type="InterPro" id="IPR051720">
    <property type="entry name" value="rRNA_MeTrfase/Polyamine_Synth"/>
</dbReference>
<dbReference type="InterPro" id="IPR029063">
    <property type="entry name" value="SAM-dependent_MTases_sf"/>
</dbReference>
<dbReference type="InterPro" id="IPR007848">
    <property type="entry name" value="Small_mtfrase_dom"/>
</dbReference>
<dbReference type="PANTHER" id="PTHR23290">
    <property type="entry name" value="RRNA N6-ADENOSINE-METHYLTRANSFERASE METTL5"/>
    <property type="match status" value="1"/>
</dbReference>
<dbReference type="PANTHER" id="PTHR23290:SF0">
    <property type="entry name" value="RRNA N6-ADENOSINE-METHYLTRANSFERASE METTL5"/>
    <property type="match status" value="1"/>
</dbReference>
<dbReference type="Pfam" id="PF05175">
    <property type="entry name" value="MTS"/>
    <property type="match status" value="1"/>
</dbReference>
<dbReference type="SUPFAM" id="SSF53335">
    <property type="entry name" value="S-adenosyl-L-methionine-dependent methyltransferases"/>
    <property type="match status" value="1"/>
</dbReference>
<dbReference type="PROSITE" id="PS00092">
    <property type="entry name" value="N6_MTASE"/>
    <property type="match status" value="1"/>
</dbReference>
<sequence length="213" mass="23978">MARLKLRKLEEYLQGVDGFEQPKILLEQYPTPPHIAACMAHHMQSQHEDIEGKLVGDLGCGCGMLSIASTLLGAQLTVGFELDGDAVDTFRGNVVEMELPNVDCVRADVLQLIGSKWEKSFDTVLMNPPFGTKHNAGMDMRFLEVALRLANRAVYSLHKTSTRSYIQKKALEWGARGSVVAELRYNIDASYKFHKQKSKDIEVDFWRFEIGTE</sequence>
<keyword id="KW-0963">Cytoplasm</keyword>
<keyword id="KW-0489">Methyltransferase</keyword>
<keyword id="KW-1185">Reference proteome</keyword>
<keyword id="KW-0949">S-adenosyl-L-methionine</keyword>
<keyword id="KW-0808">Transferase</keyword>